<accession>B5VM65</accession>
<comment type="function">
    <text evidence="1">Participates in mitochondrial biogenesis and stress response.</text>
</comment>
<comment type="subcellular location">
    <subcellularLocation>
        <location evidence="4">Mitochondrion</location>
    </subcellularLocation>
</comment>
<comment type="similarity">
    <text evidence="4">Belongs to the ISF1/MBR1 family.</text>
</comment>
<feature type="chain" id="PRO_0000408863" description="Mitochondrial biogenesis regulation protein 1">
    <location>
        <begin position="1"/>
        <end position="339"/>
    </location>
</feature>
<feature type="region of interest" description="Disordered" evidence="3">
    <location>
        <begin position="1"/>
        <end position="20"/>
    </location>
</feature>
<feature type="region of interest" description="Disordered" evidence="3">
    <location>
        <begin position="93"/>
        <end position="156"/>
    </location>
</feature>
<feature type="region of interest" description="Disordered" evidence="3">
    <location>
        <begin position="199"/>
        <end position="224"/>
    </location>
</feature>
<feature type="region of interest" description="Disordered" evidence="3">
    <location>
        <begin position="258"/>
        <end position="325"/>
    </location>
</feature>
<feature type="compositionally biased region" description="Polar residues" evidence="3">
    <location>
        <begin position="99"/>
        <end position="115"/>
    </location>
</feature>
<feature type="compositionally biased region" description="Low complexity" evidence="3">
    <location>
        <begin position="136"/>
        <end position="149"/>
    </location>
</feature>
<feature type="compositionally biased region" description="Polar residues" evidence="3">
    <location>
        <begin position="199"/>
        <end position="213"/>
    </location>
</feature>
<feature type="compositionally biased region" description="Low complexity" evidence="3">
    <location>
        <begin position="214"/>
        <end position="224"/>
    </location>
</feature>
<feature type="compositionally biased region" description="Low complexity" evidence="3">
    <location>
        <begin position="279"/>
        <end position="293"/>
    </location>
</feature>
<feature type="compositionally biased region" description="Low complexity" evidence="3">
    <location>
        <begin position="302"/>
        <end position="314"/>
    </location>
</feature>
<feature type="modified residue" description="Phosphothreonine" evidence="2">
    <location>
        <position position="159"/>
    </location>
</feature>
<feature type="modified residue" description="Phosphoserine" evidence="2">
    <location>
        <position position="177"/>
    </location>
</feature>
<feature type="modified residue" description="Phosphoserine" evidence="2">
    <location>
        <position position="224"/>
    </location>
</feature>
<feature type="modified residue" description="Phosphoserine" evidence="2">
    <location>
        <position position="227"/>
    </location>
</feature>
<keyword id="KW-0496">Mitochondrion</keyword>
<keyword id="KW-0597">Phosphoprotein</keyword>
<keyword id="KW-0346">Stress response</keyword>
<dbReference type="EMBL" id="ABSV01001463">
    <property type="protein sequence ID" value="EDZ70987.1"/>
    <property type="molecule type" value="Genomic_DNA"/>
</dbReference>
<dbReference type="Proteomes" id="UP000008988">
    <property type="component" value="Unassembled WGS sequence"/>
</dbReference>
<dbReference type="GO" id="GO:0005739">
    <property type="term" value="C:mitochondrion"/>
    <property type="evidence" value="ECO:0007669"/>
    <property type="project" value="UniProtKB-SubCell"/>
</dbReference>
<dbReference type="InterPro" id="IPR031443">
    <property type="entry name" value="Mbr1"/>
</dbReference>
<dbReference type="Pfam" id="PF17058">
    <property type="entry name" value="MBR1"/>
    <property type="match status" value="1"/>
</dbReference>
<proteinExistence type="inferred from homology"/>
<reference key="1">
    <citation type="journal article" date="2008" name="FEMS Yeast Res.">
        <title>Comparative genome analysis of a Saccharomyces cerevisiae wine strain.</title>
        <authorList>
            <person name="Borneman A.R."/>
            <person name="Forgan A.H."/>
            <person name="Pretorius I.S."/>
            <person name="Chambers P.J."/>
        </authorList>
    </citation>
    <scope>NUCLEOTIDE SEQUENCE [LARGE SCALE GENOMIC DNA]</scope>
    <source>
        <strain>AWRI1631</strain>
    </source>
</reference>
<evidence type="ECO:0000250" key="1"/>
<evidence type="ECO:0000250" key="2">
    <source>
        <dbReference type="UniProtKB" id="P23493"/>
    </source>
</evidence>
<evidence type="ECO:0000256" key="3">
    <source>
        <dbReference type="SAM" id="MobiDB-lite"/>
    </source>
</evidence>
<evidence type="ECO:0000305" key="4"/>
<gene>
    <name type="primary">MBR1</name>
    <name type="ORF">AWRI1631_111290</name>
</gene>
<sequence>MRMEKTTDKPLSAGDMNDEYSRGPIDDIDCLNFFERAVQDPCCEACDTEDADEELRAKLSSFNFQPDSSPCNAKCQQTLNPLCKIDEGLPAESELAPSRNGSVSEANSDTNSIASTVHDPVDSKYGGMPSLRKAKTTSYFTSSSSNNTTMRNPLKKCNTNINGLLVNRRSSSSSRQSIPELFSGACTKKKNNVLLKSETPNSEFSTNSLQHCNSRSFSLPRSRSRSSAIAIPTHLYGLEKYVSPELDTLTADPEESIERFSNNRPREISSCCPNDTGDTSSSLSHSNTSSSLNFPLGTNTNQFHQPRQPVQQQQSSKPNFGAGRKKSFIEMSLASSFAG</sequence>
<name>MBR1_YEAS6</name>
<organism>
    <name type="scientific">Saccharomyces cerevisiae (strain AWRI1631)</name>
    <name type="common">Baker's yeast</name>
    <dbReference type="NCBI Taxonomy" id="545124"/>
    <lineage>
        <taxon>Eukaryota</taxon>
        <taxon>Fungi</taxon>
        <taxon>Dikarya</taxon>
        <taxon>Ascomycota</taxon>
        <taxon>Saccharomycotina</taxon>
        <taxon>Saccharomycetes</taxon>
        <taxon>Saccharomycetales</taxon>
        <taxon>Saccharomycetaceae</taxon>
        <taxon>Saccharomyces</taxon>
    </lineage>
</organism>
<protein>
    <recommendedName>
        <fullName>Mitochondrial biogenesis regulation protein 1</fullName>
    </recommendedName>
</protein>